<comment type="function">
    <text evidence="1">Catalyzes the ATP-dependent condensation of GlcN-Ins and L-cysteine to form L-Cys-GlcN-Ins.</text>
</comment>
<comment type="catalytic activity">
    <reaction>
        <text>1D-myo-inositol 2-amino-2-deoxy-alpha-D-glucopyranoside + L-cysteine + ATP = 1D-myo-inositol 2-(L-cysteinylamino)-2-deoxy-alpha-D-glucopyranoside + AMP + diphosphate + H(+)</text>
        <dbReference type="Rhea" id="RHEA:26176"/>
        <dbReference type="ChEBI" id="CHEBI:15378"/>
        <dbReference type="ChEBI" id="CHEBI:30616"/>
        <dbReference type="ChEBI" id="CHEBI:33019"/>
        <dbReference type="ChEBI" id="CHEBI:35235"/>
        <dbReference type="ChEBI" id="CHEBI:58886"/>
        <dbReference type="ChEBI" id="CHEBI:58887"/>
        <dbReference type="ChEBI" id="CHEBI:456215"/>
        <dbReference type="EC" id="6.3.1.13"/>
    </reaction>
</comment>
<comment type="cofactor">
    <cofactor evidence="1">
        <name>Zn(2+)</name>
        <dbReference type="ChEBI" id="CHEBI:29105"/>
    </cofactor>
    <text evidence="1">Binds 1 zinc ion per subunit.</text>
</comment>
<comment type="subunit">
    <text evidence="1">Monomer.</text>
</comment>
<comment type="similarity">
    <text evidence="2">Belongs to the class-I aminoacyl-tRNA synthetase family. MshC subfamily.</text>
</comment>
<comment type="sequence caution" evidence="2">
    <conflict type="frameshift">
        <sequence resource="EMBL-CDS" id="AAA17194"/>
    </conflict>
</comment>
<comment type="sequence caution" evidence="2">
    <conflict type="erroneous initiation">
        <sequence resource="EMBL-CDS" id="CAC31683"/>
    </conflict>
    <text>Truncated N-terminus.</text>
</comment>
<dbReference type="EC" id="6.3.1.13"/>
<dbReference type="EMBL" id="U00017">
    <property type="protein sequence ID" value="AAA17194.1"/>
    <property type="status" value="ALT_FRAME"/>
    <property type="molecule type" value="Genomic_DNA"/>
</dbReference>
<dbReference type="EMBL" id="AL583921">
    <property type="protein sequence ID" value="CAC31683.1"/>
    <property type="status" value="ALT_INIT"/>
    <property type="molecule type" value="Genomic_DNA"/>
</dbReference>
<dbReference type="PIR" id="H87071">
    <property type="entry name" value="H87071"/>
</dbReference>
<dbReference type="SMR" id="Q49784"/>
<dbReference type="STRING" id="272631.gene:17575136"/>
<dbReference type="KEGG" id="mle:ML1302"/>
<dbReference type="Leproma" id="ML1302"/>
<dbReference type="eggNOG" id="COG0215">
    <property type="taxonomic scope" value="Bacteria"/>
</dbReference>
<dbReference type="HOGENOM" id="CLU_013528_0_0_11"/>
<dbReference type="Proteomes" id="UP000000806">
    <property type="component" value="Chromosome"/>
</dbReference>
<dbReference type="GO" id="GO:0005829">
    <property type="term" value="C:cytosol"/>
    <property type="evidence" value="ECO:0007669"/>
    <property type="project" value="TreeGrafter"/>
</dbReference>
<dbReference type="GO" id="GO:0005524">
    <property type="term" value="F:ATP binding"/>
    <property type="evidence" value="ECO:0007669"/>
    <property type="project" value="UniProtKB-KW"/>
</dbReference>
<dbReference type="GO" id="GO:0035446">
    <property type="term" value="F:cysteine-glucosaminylinositol ligase activity"/>
    <property type="evidence" value="ECO:0007669"/>
    <property type="project" value="UniProtKB-UniRule"/>
</dbReference>
<dbReference type="GO" id="GO:0004817">
    <property type="term" value="F:cysteine-tRNA ligase activity"/>
    <property type="evidence" value="ECO:0007669"/>
    <property type="project" value="TreeGrafter"/>
</dbReference>
<dbReference type="GO" id="GO:0008270">
    <property type="term" value="F:zinc ion binding"/>
    <property type="evidence" value="ECO:0007669"/>
    <property type="project" value="UniProtKB-UniRule"/>
</dbReference>
<dbReference type="GO" id="GO:0006423">
    <property type="term" value="P:cysteinyl-tRNA aminoacylation"/>
    <property type="evidence" value="ECO:0007669"/>
    <property type="project" value="TreeGrafter"/>
</dbReference>
<dbReference type="GO" id="GO:0010125">
    <property type="term" value="P:mycothiol biosynthetic process"/>
    <property type="evidence" value="ECO:0007669"/>
    <property type="project" value="UniProtKB-UniRule"/>
</dbReference>
<dbReference type="CDD" id="cd07955">
    <property type="entry name" value="Anticodon_Ia_Cys_like"/>
    <property type="match status" value="1"/>
</dbReference>
<dbReference type="CDD" id="cd00672">
    <property type="entry name" value="CysRS_core"/>
    <property type="match status" value="1"/>
</dbReference>
<dbReference type="FunFam" id="3.40.50.620:FF:000134">
    <property type="entry name" value="L-cysteine:1D-myo-inositol 2-amino-2-deoxy-alpha-D-glucopyranoside ligase"/>
    <property type="match status" value="1"/>
</dbReference>
<dbReference type="Gene3D" id="1.20.120.640">
    <property type="entry name" value="Anticodon-binding domain of a subclass of class I aminoacyl-tRNA synthetases"/>
    <property type="match status" value="1"/>
</dbReference>
<dbReference type="Gene3D" id="3.40.50.620">
    <property type="entry name" value="HUPs"/>
    <property type="match status" value="1"/>
</dbReference>
<dbReference type="HAMAP" id="MF_01697">
    <property type="entry name" value="MshC"/>
    <property type="match status" value="1"/>
</dbReference>
<dbReference type="InterPro" id="IPR024909">
    <property type="entry name" value="Cys-tRNA/MSH_ligase"/>
</dbReference>
<dbReference type="InterPro" id="IPR017812">
    <property type="entry name" value="Mycothiol_ligase_MshC"/>
</dbReference>
<dbReference type="InterPro" id="IPR014729">
    <property type="entry name" value="Rossmann-like_a/b/a_fold"/>
</dbReference>
<dbReference type="InterPro" id="IPR032678">
    <property type="entry name" value="tRNA-synt_1_cat_dom"/>
</dbReference>
<dbReference type="NCBIfam" id="TIGR03447">
    <property type="entry name" value="mycothiol_MshC"/>
    <property type="match status" value="1"/>
</dbReference>
<dbReference type="PANTHER" id="PTHR10890:SF3">
    <property type="entry name" value="CYSTEINE--TRNA LIGASE, CYTOPLASMIC"/>
    <property type="match status" value="1"/>
</dbReference>
<dbReference type="PANTHER" id="PTHR10890">
    <property type="entry name" value="CYSTEINYL-TRNA SYNTHETASE"/>
    <property type="match status" value="1"/>
</dbReference>
<dbReference type="Pfam" id="PF01406">
    <property type="entry name" value="tRNA-synt_1e"/>
    <property type="match status" value="1"/>
</dbReference>
<dbReference type="PRINTS" id="PR00983">
    <property type="entry name" value="TRNASYNTHCYS"/>
</dbReference>
<dbReference type="SUPFAM" id="SSF52374">
    <property type="entry name" value="Nucleotidylyl transferase"/>
    <property type="match status" value="1"/>
</dbReference>
<evidence type="ECO:0000250" key="1"/>
<evidence type="ECO:0000305" key="2"/>
<sequence length="412" mass="45293">MVFRTGSGVAGRGPELRLYDTSDRQVRPVSAAVAPTCKATMYVCGITPYDATHLGHAATYLAFDLIHRLWLDLGHEVHYVQNVTDVDDPLFERADRNGVDWRDLAEREVALFRDDMASLRILPPHDYVAATETIVEIVELVDKMLVSGAAYVIDDEYPDIYFRADATLQFGYESGYDRDTMLRLYEQSGGDPRRPGKNGELDALLWRAARPGEPSWSSPFGPGRPGWHVECAAIALSRIGIGLDIQGGGSDLIFPHHEFTAAHAECVRGERRFARHYVHAGMIGWDEHKMSKSRGNLVLVSTLRAQGAPPSAIRLGLLAGHYRADRFWSSQLLDDAIARLHRWRTAASMPAGPDVADVIARVRGYLADDLDTPKAIAALDGWVTDALEYGGHDAAAPKLLATAIDALLGVDL</sequence>
<reference key="1">
    <citation type="submission" date="1994-03" db="EMBL/GenBank/DDBJ databases">
        <authorList>
            <person name="Smith D.R."/>
            <person name="Robison K."/>
        </authorList>
    </citation>
    <scope>NUCLEOTIDE SEQUENCE [GENOMIC DNA]</scope>
</reference>
<reference key="2">
    <citation type="journal article" date="2001" name="Nature">
        <title>Massive gene decay in the leprosy bacillus.</title>
        <authorList>
            <person name="Cole S.T."/>
            <person name="Eiglmeier K."/>
            <person name="Parkhill J."/>
            <person name="James K.D."/>
            <person name="Thomson N.R."/>
            <person name="Wheeler P.R."/>
            <person name="Honore N."/>
            <person name="Garnier T."/>
            <person name="Churcher C.M."/>
            <person name="Harris D.E."/>
            <person name="Mungall K.L."/>
            <person name="Basham D."/>
            <person name="Brown D."/>
            <person name="Chillingworth T."/>
            <person name="Connor R."/>
            <person name="Davies R.M."/>
            <person name="Devlin K."/>
            <person name="Duthoy S."/>
            <person name="Feltwell T."/>
            <person name="Fraser A."/>
            <person name="Hamlin N."/>
            <person name="Holroyd S."/>
            <person name="Hornsby T."/>
            <person name="Jagels K."/>
            <person name="Lacroix C."/>
            <person name="Maclean J."/>
            <person name="Moule S."/>
            <person name="Murphy L.D."/>
            <person name="Oliver K."/>
            <person name="Quail M.A."/>
            <person name="Rajandream M.A."/>
            <person name="Rutherford K.M."/>
            <person name="Rutter S."/>
            <person name="Seeger K."/>
            <person name="Simon S."/>
            <person name="Simmonds M."/>
            <person name="Skelton J."/>
            <person name="Squares R."/>
            <person name="Squares S."/>
            <person name="Stevens K."/>
            <person name="Taylor K."/>
            <person name="Whitehead S."/>
            <person name="Woodward J.R."/>
            <person name="Barrell B.G."/>
        </authorList>
    </citation>
    <scope>NUCLEOTIDE SEQUENCE [LARGE SCALE GENOMIC DNA]</scope>
    <source>
        <strain>TN</strain>
    </source>
</reference>
<organism>
    <name type="scientific">Mycobacterium leprae (strain TN)</name>
    <dbReference type="NCBI Taxonomy" id="272631"/>
    <lineage>
        <taxon>Bacteria</taxon>
        <taxon>Bacillati</taxon>
        <taxon>Actinomycetota</taxon>
        <taxon>Actinomycetes</taxon>
        <taxon>Mycobacteriales</taxon>
        <taxon>Mycobacteriaceae</taxon>
        <taxon>Mycobacterium</taxon>
    </lineage>
</organism>
<gene>
    <name type="primary">mshC</name>
    <name type="synonym">cysS2</name>
    <name type="ordered locus">ML1302</name>
    <name type="ORF">B2126_C2_193</name>
</gene>
<proteinExistence type="inferred from homology"/>
<accession>Q49784</accession>
<protein>
    <recommendedName>
        <fullName>L-cysteine:1D-myo-inositol 2-amino-2-deoxy-alpha-D-glucopyranoside ligase</fullName>
        <shortName>L-Cys:GlcN-Ins ligase</shortName>
        <ecNumber>6.3.1.13</ecNumber>
    </recommendedName>
    <alternativeName>
        <fullName>Mycothiol ligase</fullName>
        <shortName>MSH ligase</shortName>
    </alternativeName>
</protein>
<keyword id="KW-0067">ATP-binding</keyword>
<keyword id="KW-0436">Ligase</keyword>
<keyword id="KW-0479">Metal-binding</keyword>
<keyword id="KW-0547">Nucleotide-binding</keyword>
<keyword id="KW-1185">Reference proteome</keyword>
<keyword id="KW-0862">Zinc</keyword>
<name>MSHC_MYCLE</name>
<feature type="chain" id="PRO_0000159438" description="L-cysteine:1D-myo-inositol 2-amino-2-deoxy-alpha-D-glucopyranoside ligase">
    <location>
        <begin position="1"/>
        <end position="412"/>
    </location>
</feature>
<feature type="short sequence motif" description="'HIGH' region">
    <location>
        <begin position="46"/>
        <end position="56"/>
    </location>
</feature>
<feature type="short sequence motif" description="'ERGGDP' region">
    <location>
        <begin position="187"/>
        <end position="192"/>
    </location>
</feature>
<feature type="short sequence motif" description="'KMSKS' region">
    <location>
        <begin position="289"/>
        <end position="293"/>
    </location>
</feature>
<feature type="binding site" evidence="1">
    <location>
        <begin position="44"/>
        <end position="47"/>
    </location>
    <ligand>
        <name>L-cysteinyl-5'-AMP</name>
        <dbReference type="ChEBI" id="CHEBI:144924"/>
    </ligand>
</feature>
<feature type="binding site" evidence="1">
    <location>
        <position position="44"/>
    </location>
    <ligand>
        <name>Zn(2+)</name>
        <dbReference type="ChEBI" id="CHEBI:29105"/>
    </ligand>
</feature>
<feature type="binding site" evidence="1">
    <location>
        <position position="59"/>
    </location>
    <ligand>
        <name>L-cysteinyl-5'-AMP</name>
        <dbReference type="ChEBI" id="CHEBI:144924"/>
    </ligand>
</feature>
<feature type="binding site" evidence="1">
    <location>
        <begin position="82"/>
        <end position="84"/>
    </location>
    <ligand>
        <name>L-cysteinyl-5'-AMP</name>
        <dbReference type="ChEBI" id="CHEBI:144924"/>
    </ligand>
</feature>
<feature type="binding site" evidence="1">
    <location>
        <position position="227"/>
    </location>
    <ligand>
        <name>L-cysteinyl-5'-AMP</name>
        <dbReference type="ChEBI" id="CHEBI:144924"/>
    </ligand>
</feature>
<feature type="binding site" evidence="1">
    <location>
        <position position="231"/>
    </location>
    <ligand>
        <name>Zn(2+)</name>
        <dbReference type="ChEBI" id="CHEBI:29105"/>
    </ligand>
</feature>
<feature type="binding site" evidence="1">
    <location>
        <begin position="249"/>
        <end position="251"/>
    </location>
    <ligand>
        <name>L-cysteinyl-5'-AMP</name>
        <dbReference type="ChEBI" id="CHEBI:144924"/>
    </ligand>
</feature>
<feature type="binding site" evidence="1">
    <location>
        <position position="256"/>
    </location>
    <ligand>
        <name>Zn(2+)</name>
        <dbReference type="ChEBI" id="CHEBI:29105"/>
    </ligand>
</feature>
<feature type="binding site" evidence="1">
    <location>
        <position position="283"/>
    </location>
    <ligand>
        <name>L-cysteinyl-5'-AMP</name>
        <dbReference type="ChEBI" id="CHEBI:144924"/>
    </ligand>
</feature>